<sequence length="208" mass="23200">MGKKRSVSSQRWLKEHFDDQFVQKAQKKGLRSRAVFKLEEIQKRDKLIKKGQTVVDLGAAPGGWSQYVADYFNGDGQIIACDILAMDPIAGVDFLQGDFREESVLEALLERIGGKNVDVVLSDMAPNMSGNGTVDQARSMYLVELALDMCHQVLKPGGSFAVKVFQGQGFESFLKDVRAAFNDVKTRKPESSRARSREVYLVATDYKL</sequence>
<gene>
    <name evidence="1" type="primary">rlmE</name>
    <name evidence="1" type="synonym">ftsJ</name>
    <name evidence="1" type="synonym">rrmJ</name>
    <name type="ordered locus">IL0976</name>
</gene>
<organism>
    <name type="scientific">Idiomarina loihiensis (strain ATCC BAA-735 / DSM 15497 / L2-TR)</name>
    <dbReference type="NCBI Taxonomy" id="283942"/>
    <lineage>
        <taxon>Bacteria</taxon>
        <taxon>Pseudomonadati</taxon>
        <taxon>Pseudomonadota</taxon>
        <taxon>Gammaproteobacteria</taxon>
        <taxon>Alteromonadales</taxon>
        <taxon>Idiomarinaceae</taxon>
        <taxon>Idiomarina</taxon>
    </lineage>
</organism>
<reference key="1">
    <citation type="journal article" date="2004" name="Proc. Natl. Acad. Sci. U.S.A.">
        <title>Genome sequence of the deep-sea gamma-proteobacterium Idiomarina loihiensis reveals amino acid fermentation as a source of carbon and energy.</title>
        <authorList>
            <person name="Hou S."/>
            <person name="Saw J.H."/>
            <person name="Lee K.S."/>
            <person name="Freitas T.A."/>
            <person name="Belisle C."/>
            <person name="Kawarabayasi Y."/>
            <person name="Donachie S.P."/>
            <person name="Pikina A."/>
            <person name="Galperin M.Y."/>
            <person name="Koonin E.V."/>
            <person name="Makarova K.S."/>
            <person name="Omelchenko M.V."/>
            <person name="Sorokin A."/>
            <person name="Wolf Y.I."/>
            <person name="Li Q.X."/>
            <person name="Keum Y.S."/>
            <person name="Campbell S."/>
            <person name="Denery J."/>
            <person name="Aizawa S."/>
            <person name="Shibata S."/>
            <person name="Malahoff A."/>
            <person name="Alam M."/>
        </authorList>
    </citation>
    <scope>NUCLEOTIDE SEQUENCE [LARGE SCALE GENOMIC DNA]</scope>
    <source>
        <strain>ATCC BAA-735 / DSM 15497 / L2-TR</strain>
    </source>
</reference>
<feature type="chain" id="PRO_0000155505" description="Ribosomal RNA large subunit methyltransferase E">
    <location>
        <begin position="1"/>
        <end position="208"/>
    </location>
</feature>
<feature type="active site" description="Proton acceptor" evidence="1">
    <location>
        <position position="163"/>
    </location>
</feature>
<feature type="binding site" evidence="1">
    <location>
        <position position="62"/>
    </location>
    <ligand>
        <name>S-adenosyl-L-methionine</name>
        <dbReference type="ChEBI" id="CHEBI:59789"/>
    </ligand>
</feature>
<feature type="binding site" evidence="1">
    <location>
        <position position="64"/>
    </location>
    <ligand>
        <name>S-adenosyl-L-methionine</name>
        <dbReference type="ChEBI" id="CHEBI:59789"/>
    </ligand>
</feature>
<feature type="binding site" evidence="1">
    <location>
        <position position="82"/>
    </location>
    <ligand>
        <name>S-adenosyl-L-methionine</name>
        <dbReference type="ChEBI" id="CHEBI:59789"/>
    </ligand>
</feature>
<feature type="binding site" evidence="1">
    <location>
        <position position="98"/>
    </location>
    <ligand>
        <name>S-adenosyl-L-methionine</name>
        <dbReference type="ChEBI" id="CHEBI:59789"/>
    </ligand>
</feature>
<feature type="binding site" evidence="1">
    <location>
        <position position="123"/>
    </location>
    <ligand>
        <name>S-adenosyl-L-methionine</name>
        <dbReference type="ChEBI" id="CHEBI:59789"/>
    </ligand>
</feature>
<proteinExistence type="inferred from homology"/>
<name>RLME_IDILO</name>
<dbReference type="EC" id="2.1.1.166" evidence="1"/>
<dbReference type="EMBL" id="AE017340">
    <property type="protein sequence ID" value="AAV81816.1"/>
    <property type="molecule type" value="Genomic_DNA"/>
</dbReference>
<dbReference type="RefSeq" id="WP_011234227.1">
    <property type="nucleotide sequence ID" value="NC_006512.1"/>
</dbReference>
<dbReference type="SMR" id="Q5QXK8"/>
<dbReference type="STRING" id="283942.IL0976"/>
<dbReference type="GeneID" id="41336138"/>
<dbReference type="KEGG" id="ilo:IL0976"/>
<dbReference type="eggNOG" id="COG0293">
    <property type="taxonomic scope" value="Bacteria"/>
</dbReference>
<dbReference type="HOGENOM" id="CLU_009422_4_0_6"/>
<dbReference type="OrthoDB" id="9790080at2"/>
<dbReference type="Proteomes" id="UP000001171">
    <property type="component" value="Chromosome"/>
</dbReference>
<dbReference type="GO" id="GO:0005737">
    <property type="term" value="C:cytoplasm"/>
    <property type="evidence" value="ECO:0007669"/>
    <property type="project" value="UniProtKB-SubCell"/>
</dbReference>
<dbReference type="GO" id="GO:0008650">
    <property type="term" value="F:rRNA (uridine-2'-O-)-methyltransferase activity"/>
    <property type="evidence" value="ECO:0007669"/>
    <property type="project" value="UniProtKB-UniRule"/>
</dbReference>
<dbReference type="FunFam" id="3.40.50.150:FF:000005">
    <property type="entry name" value="Ribosomal RNA large subunit methyltransferase E"/>
    <property type="match status" value="1"/>
</dbReference>
<dbReference type="Gene3D" id="3.40.50.150">
    <property type="entry name" value="Vaccinia Virus protein VP39"/>
    <property type="match status" value="1"/>
</dbReference>
<dbReference type="HAMAP" id="MF_01547">
    <property type="entry name" value="RNA_methyltr_E"/>
    <property type="match status" value="1"/>
</dbReference>
<dbReference type="InterPro" id="IPR050082">
    <property type="entry name" value="RNA_methyltr_RlmE"/>
</dbReference>
<dbReference type="InterPro" id="IPR002877">
    <property type="entry name" value="RNA_MeTrfase_FtsJ_dom"/>
</dbReference>
<dbReference type="InterPro" id="IPR015507">
    <property type="entry name" value="rRNA-MeTfrase_E"/>
</dbReference>
<dbReference type="InterPro" id="IPR029063">
    <property type="entry name" value="SAM-dependent_MTases_sf"/>
</dbReference>
<dbReference type="NCBIfam" id="NF008390">
    <property type="entry name" value="PRK11188.1"/>
    <property type="match status" value="1"/>
</dbReference>
<dbReference type="PANTHER" id="PTHR10920">
    <property type="entry name" value="RIBOSOMAL RNA METHYLTRANSFERASE"/>
    <property type="match status" value="1"/>
</dbReference>
<dbReference type="PANTHER" id="PTHR10920:SF18">
    <property type="entry name" value="RRNA METHYLTRANSFERASE 2, MITOCHONDRIAL"/>
    <property type="match status" value="1"/>
</dbReference>
<dbReference type="Pfam" id="PF01728">
    <property type="entry name" value="FtsJ"/>
    <property type="match status" value="1"/>
</dbReference>
<dbReference type="PIRSF" id="PIRSF005461">
    <property type="entry name" value="23S_rRNA_mtase"/>
    <property type="match status" value="1"/>
</dbReference>
<dbReference type="SUPFAM" id="SSF53335">
    <property type="entry name" value="S-adenosyl-L-methionine-dependent methyltransferases"/>
    <property type="match status" value="1"/>
</dbReference>
<comment type="function">
    <text evidence="1">Specifically methylates the uridine in position 2552 of 23S rRNA at the 2'-O position of the ribose in the fully assembled 50S ribosomal subunit.</text>
</comment>
<comment type="catalytic activity">
    <reaction evidence="1">
        <text>uridine(2552) in 23S rRNA + S-adenosyl-L-methionine = 2'-O-methyluridine(2552) in 23S rRNA + S-adenosyl-L-homocysteine + H(+)</text>
        <dbReference type="Rhea" id="RHEA:42720"/>
        <dbReference type="Rhea" id="RHEA-COMP:10202"/>
        <dbReference type="Rhea" id="RHEA-COMP:10203"/>
        <dbReference type="ChEBI" id="CHEBI:15378"/>
        <dbReference type="ChEBI" id="CHEBI:57856"/>
        <dbReference type="ChEBI" id="CHEBI:59789"/>
        <dbReference type="ChEBI" id="CHEBI:65315"/>
        <dbReference type="ChEBI" id="CHEBI:74478"/>
        <dbReference type="EC" id="2.1.1.166"/>
    </reaction>
</comment>
<comment type="subcellular location">
    <subcellularLocation>
        <location evidence="1">Cytoplasm</location>
    </subcellularLocation>
</comment>
<comment type="similarity">
    <text evidence="1">Belongs to the class I-like SAM-binding methyltransferase superfamily. RNA methyltransferase RlmE family.</text>
</comment>
<keyword id="KW-0963">Cytoplasm</keyword>
<keyword id="KW-0489">Methyltransferase</keyword>
<keyword id="KW-1185">Reference proteome</keyword>
<keyword id="KW-0698">rRNA processing</keyword>
<keyword id="KW-0949">S-adenosyl-L-methionine</keyword>
<keyword id="KW-0808">Transferase</keyword>
<evidence type="ECO:0000255" key="1">
    <source>
        <dbReference type="HAMAP-Rule" id="MF_01547"/>
    </source>
</evidence>
<accession>Q5QXK8</accession>
<protein>
    <recommendedName>
        <fullName evidence="1">Ribosomal RNA large subunit methyltransferase E</fullName>
        <ecNumber evidence="1">2.1.1.166</ecNumber>
    </recommendedName>
    <alternativeName>
        <fullName evidence="1">23S rRNA Um2552 methyltransferase</fullName>
    </alternativeName>
    <alternativeName>
        <fullName evidence="1">rRNA (uridine-2'-O-)-methyltransferase</fullName>
    </alternativeName>
</protein>